<name>Y580_METJA</name>
<accession>Q58000</accession>
<sequence>MTKILKVKLMKIALPIDNNRLSPHFGRCEKFMIVEIENGEIKNKEIIENTARNGMHGVGTTSASLIANMGVNAIIVQNIGPKAYSVFKQLGIDVYKANTTSIDECIKLFLEGKLEKFE</sequence>
<reference key="1">
    <citation type="journal article" date="1996" name="Science">
        <title>Complete genome sequence of the methanogenic archaeon, Methanococcus jannaschii.</title>
        <authorList>
            <person name="Bult C.J."/>
            <person name="White O."/>
            <person name="Olsen G.J."/>
            <person name="Zhou L."/>
            <person name="Fleischmann R.D."/>
            <person name="Sutton G.G."/>
            <person name="Blake J.A."/>
            <person name="FitzGerald L.M."/>
            <person name="Clayton R.A."/>
            <person name="Gocayne J.D."/>
            <person name="Kerlavage A.R."/>
            <person name="Dougherty B.A."/>
            <person name="Tomb J.-F."/>
            <person name="Adams M.D."/>
            <person name="Reich C.I."/>
            <person name="Overbeek R."/>
            <person name="Kirkness E.F."/>
            <person name="Weinstock K.G."/>
            <person name="Merrick J.M."/>
            <person name="Glodek A."/>
            <person name="Scott J.L."/>
            <person name="Geoghagen N.S.M."/>
            <person name="Weidman J.F."/>
            <person name="Fuhrmann J.L."/>
            <person name="Nguyen D."/>
            <person name="Utterback T.R."/>
            <person name="Kelley J.M."/>
            <person name="Peterson J.D."/>
            <person name="Sadow P.W."/>
            <person name="Hanna M.C."/>
            <person name="Cotton M.D."/>
            <person name="Roberts K.M."/>
            <person name="Hurst M.A."/>
            <person name="Kaine B.P."/>
            <person name="Borodovsky M."/>
            <person name="Klenk H.-P."/>
            <person name="Fraser C.M."/>
            <person name="Smith H.O."/>
            <person name="Woese C.R."/>
            <person name="Venter J.C."/>
        </authorList>
    </citation>
    <scope>NUCLEOTIDE SEQUENCE [LARGE SCALE GENOMIC DNA]</scope>
    <source>
        <strain>ATCC 43067 / DSM 2661 / JAL-1 / JCM 10045 / NBRC 100440</strain>
    </source>
</reference>
<feature type="chain" id="PRO_0000106941" description="Uncharacterized protein MJ0580">
    <location>
        <begin position="1"/>
        <end position="118"/>
    </location>
</feature>
<proteinExistence type="predicted"/>
<keyword id="KW-1185">Reference proteome</keyword>
<dbReference type="EMBL" id="L77117">
    <property type="protein sequence ID" value="AAB98571.1"/>
    <property type="molecule type" value="Genomic_DNA"/>
</dbReference>
<dbReference type="PIR" id="D64372">
    <property type="entry name" value="D64372"/>
</dbReference>
<dbReference type="SMR" id="Q58000"/>
<dbReference type="STRING" id="243232.MJ_0580"/>
<dbReference type="PaxDb" id="243232-MJ_0580"/>
<dbReference type="EnsemblBacteria" id="AAB98571">
    <property type="protein sequence ID" value="AAB98571"/>
    <property type="gene ID" value="MJ_0580"/>
</dbReference>
<dbReference type="KEGG" id="mja:MJ_0580"/>
<dbReference type="eggNOG" id="arCOG02734">
    <property type="taxonomic scope" value="Archaea"/>
</dbReference>
<dbReference type="HOGENOM" id="CLU_104194_2_3_2"/>
<dbReference type="InParanoid" id="Q58000"/>
<dbReference type="OrthoDB" id="25911at2157"/>
<dbReference type="PhylomeDB" id="Q58000"/>
<dbReference type="Proteomes" id="UP000000805">
    <property type="component" value="Chromosome"/>
</dbReference>
<dbReference type="CDD" id="cd00851">
    <property type="entry name" value="MTH1175"/>
    <property type="match status" value="1"/>
</dbReference>
<dbReference type="Gene3D" id="3.30.420.130">
    <property type="entry name" value="Dinitrogenase iron-molybdenum cofactor biosynthesis domain"/>
    <property type="match status" value="1"/>
</dbReference>
<dbReference type="InterPro" id="IPR003731">
    <property type="entry name" value="Di-Nase_FeMo-co_biosynth"/>
</dbReference>
<dbReference type="InterPro" id="IPR036105">
    <property type="entry name" value="DiNase_FeMo-co_biosyn_sf"/>
</dbReference>
<dbReference type="InterPro" id="IPR033913">
    <property type="entry name" value="MTH1175_dom"/>
</dbReference>
<dbReference type="InterPro" id="IPR051840">
    <property type="entry name" value="NifX/NifY_domain"/>
</dbReference>
<dbReference type="PANTHER" id="PTHR33937:SF2">
    <property type="entry name" value="DINITROGENASE IRON-MOLYBDENUM COFACTOR BIOSYNTHESIS DOMAIN-CONTAINING PROTEIN"/>
    <property type="match status" value="1"/>
</dbReference>
<dbReference type="PANTHER" id="PTHR33937">
    <property type="entry name" value="IRON-MOLYBDENUM PROTEIN-RELATED-RELATED"/>
    <property type="match status" value="1"/>
</dbReference>
<dbReference type="Pfam" id="PF02579">
    <property type="entry name" value="Nitro_FeMo-Co"/>
    <property type="match status" value="1"/>
</dbReference>
<dbReference type="SUPFAM" id="SSF53146">
    <property type="entry name" value="Nitrogenase accessory factor-like"/>
    <property type="match status" value="1"/>
</dbReference>
<gene>
    <name type="ordered locus">MJ0580</name>
</gene>
<protein>
    <recommendedName>
        <fullName>Uncharacterized protein MJ0580</fullName>
    </recommendedName>
</protein>
<organism>
    <name type="scientific">Methanocaldococcus jannaschii (strain ATCC 43067 / DSM 2661 / JAL-1 / JCM 10045 / NBRC 100440)</name>
    <name type="common">Methanococcus jannaschii</name>
    <dbReference type="NCBI Taxonomy" id="243232"/>
    <lineage>
        <taxon>Archaea</taxon>
        <taxon>Methanobacteriati</taxon>
        <taxon>Methanobacteriota</taxon>
        <taxon>Methanomada group</taxon>
        <taxon>Methanococci</taxon>
        <taxon>Methanococcales</taxon>
        <taxon>Methanocaldococcaceae</taxon>
        <taxon>Methanocaldococcus</taxon>
    </lineage>
</organism>